<accession>Q03SK9</accession>
<comment type="function">
    <text evidence="1">Required for rescue of stalled ribosomes mediated by trans-translation. Binds to transfer-messenger RNA (tmRNA), required for stable association of tmRNA with ribosomes. tmRNA and SmpB together mimic tRNA shape, replacing the anticodon stem-loop with SmpB. tmRNA is encoded by the ssrA gene; the 2 termini fold to resemble tRNA(Ala) and it encodes a 'tag peptide', a short internal open reading frame. During trans-translation Ala-aminoacylated tmRNA acts like a tRNA, entering the A-site of stalled ribosomes, displacing the stalled mRNA. The ribosome then switches to translate the ORF on the tmRNA; the nascent peptide is terminated with the 'tag peptide' encoded by the tmRNA and targeted for degradation. The ribosome is freed to recommence translation, which seems to be the essential function of trans-translation.</text>
</comment>
<comment type="subcellular location">
    <subcellularLocation>
        <location evidence="1">Cytoplasm</location>
    </subcellularLocation>
    <text evidence="1">The tmRNA-SmpB complex associates with stalled 70S ribosomes.</text>
</comment>
<comment type="similarity">
    <text evidence="1">Belongs to the SmpB family.</text>
</comment>
<organism>
    <name type="scientific">Levilactobacillus brevis (strain ATCC 367 / BCRC 12310 / CIP 105137 / JCM 1170 / LMG 11437 / NCIMB 947 / NCTC 947)</name>
    <name type="common">Lactobacillus brevis</name>
    <dbReference type="NCBI Taxonomy" id="387344"/>
    <lineage>
        <taxon>Bacteria</taxon>
        <taxon>Bacillati</taxon>
        <taxon>Bacillota</taxon>
        <taxon>Bacilli</taxon>
        <taxon>Lactobacillales</taxon>
        <taxon>Lactobacillaceae</taxon>
        <taxon>Levilactobacillus</taxon>
    </lineage>
</organism>
<name>SSRP_LEVBA</name>
<feature type="chain" id="PRO_0000331054" description="SsrA-binding protein">
    <location>
        <begin position="1"/>
        <end position="157"/>
    </location>
</feature>
<protein>
    <recommendedName>
        <fullName evidence="1">SsrA-binding protein</fullName>
    </recommendedName>
    <alternativeName>
        <fullName evidence="1">Small protein B</fullName>
    </alternativeName>
</protein>
<sequence length="157" mass="18399">MAKKKSKKTPDNVLAQNRKARHDYTVLETVEAGIALTGTEIKSVRERRVNLQDGFAQIRNNEAWLMNVHISEYVQGNRFNHDPLRNRKLLLHKKEIRRLGQATMDKGVTLVPLRMYLKHGFAKVLIGVAQGKREFDKRETIKRREQDRQIARVMKHY</sequence>
<reference key="1">
    <citation type="journal article" date="2006" name="Proc. Natl. Acad. Sci. U.S.A.">
        <title>Comparative genomics of the lactic acid bacteria.</title>
        <authorList>
            <person name="Makarova K.S."/>
            <person name="Slesarev A."/>
            <person name="Wolf Y.I."/>
            <person name="Sorokin A."/>
            <person name="Mirkin B."/>
            <person name="Koonin E.V."/>
            <person name="Pavlov A."/>
            <person name="Pavlova N."/>
            <person name="Karamychev V."/>
            <person name="Polouchine N."/>
            <person name="Shakhova V."/>
            <person name="Grigoriev I."/>
            <person name="Lou Y."/>
            <person name="Rohksar D."/>
            <person name="Lucas S."/>
            <person name="Huang K."/>
            <person name="Goodstein D.M."/>
            <person name="Hawkins T."/>
            <person name="Plengvidhya V."/>
            <person name="Welker D."/>
            <person name="Hughes J."/>
            <person name="Goh Y."/>
            <person name="Benson A."/>
            <person name="Baldwin K."/>
            <person name="Lee J.-H."/>
            <person name="Diaz-Muniz I."/>
            <person name="Dosti B."/>
            <person name="Smeianov V."/>
            <person name="Wechter W."/>
            <person name="Barabote R."/>
            <person name="Lorca G."/>
            <person name="Altermann E."/>
            <person name="Barrangou R."/>
            <person name="Ganesan B."/>
            <person name="Xie Y."/>
            <person name="Rawsthorne H."/>
            <person name="Tamir D."/>
            <person name="Parker C."/>
            <person name="Breidt F."/>
            <person name="Broadbent J.R."/>
            <person name="Hutkins R."/>
            <person name="O'Sullivan D."/>
            <person name="Steele J."/>
            <person name="Unlu G."/>
            <person name="Saier M.H. Jr."/>
            <person name="Klaenhammer T."/>
            <person name="Richardson P."/>
            <person name="Kozyavkin S."/>
            <person name="Weimer B.C."/>
            <person name="Mills D.A."/>
        </authorList>
    </citation>
    <scope>NUCLEOTIDE SEQUENCE [LARGE SCALE GENOMIC DNA]</scope>
    <source>
        <strain>ATCC 367 / BCRC 12310 / CIP 105137 / JCM 1170 / LMG 11437 / NCIMB 947 / NCTC 947</strain>
    </source>
</reference>
<gene>
    <name evidence="1" type="primary">smpB</name>
    <name type="ordered locus">LVIS_0670</name>
</gene>
<dbReference type="EMBL" id="CP000416">
    <property type="protein sequence ID" value="ABJ63813.1"/>
    <property type="molecule type" value="Genomic_DNA"/>
</dbReference>
<dbReference type="RefSeq" id="WP_011667445.1">
    <property type="nucleotide sequence ID" value="NC_008497.1"/>
</dbReference>
<dbReference type="SMR" id="Q03SK9"/>
<dbReference type="STRING" id="387344.LVIS_0670"/>
<dbReference type="GeneID" id="56992487"/>
<dbReference type="KEGG" id="lbr:LVIS_0670"/>
<dbReference type="eggNOG" id="COG0691">
    <property type="taxonomic scope" value="Bacteria"/>
</dbReference>
<dbReference type="HOGENOM" id="CLU_108953_0_0_9"/>
<dbReference type="Proteomes" id="UP000001652">
    <property type="component" value="Chromosome"/>
</dbReference>
<dbReference type="GO" id="GO:0005829">
    <property type="term" value="C:cytosol"/>
    <property type="evidence" value="ECO:0007669"/>
    <property type="project" value="TreeGrafter"/>
</dbReference>
<dbReference type="GO" id="GO:0003723">
    <property type="term" value="F:RNA binding"/>
    <property type="evidence" value="ECO:0007669"/>
    <property type="project" value="UniProtKB-UniRule"/>
</dbReference>
<dbReference type="GO" id="GO:0070929">
    <property type="term" value="P:trans-translation"/>
    <property type="evidence" value="ECO:0007669"/>
    <property type="project" value="UniProtKB-UniRule"/>
</dbReference>
<dbReference type="CDD" id="cd09294">
    <property type="entry name" value="SmpB"/>
    <property type="match status" value="1"/>
</dbReference>
<dbReference type="Gene3D" id="2.40.280.10">
    <property type="match status" value="1"/>
</dbReference>
<dbReference type="HAMAP" id="MF_00023">
    <property type="entry name" value="SmpB"/>
    <property type="match status" value="1"/>
</dbReference>
<dbReference type="InterPro" id="IPR023620">
    <property type="entry name" value="SmpB"/>
</dbReference>
<dbReference type="InterPro" id="IPR000037">
    <property type="entry name" value="SsrA-bd_prot"/>
</dbReference>
<dbReference type="InterPro" id="IPR020081">
    <property type="entry name" value="SsrA-bd_prot_CS"/>
</dbReference>
<dbReference type="NCBIfam" id="NF003843">
    <property type="entry name" value="PRK05422.1"/>
    <property type="match status" value="1"/>
</dbReference>
<dbReference type="NCBIfam" id="TIGR00086">
    <property type="entry name" value="smpB"/>
    <property type="match status" value="1"/>
</dbReference>
<dbReference type="PANTHER" id="PTHR30308:SF2">
    <property type="entry name" value="SSRA-BINDING PROTEIN"/>
    <property type="match status" value="1"/>
</dbReference>
<dbReference type="PANTHER" id="PTHR30308">
    <property type="entry name" value="TMRNA-BINDING COMPONENT OF TRANS-TRANSLATION TAGGING COMPLEX"/>
    <property type="match status" value="1"/>
</dbReference>
<dbReference type="Pfam" id="PF01668">
    <property type="entry name" value="SmpB"/>
    <property type="match status" value="1"/>
</dbReference>
<dbReference type="SUPFAM" id="SSF74982">
    <property type="entry name" value="Small protein B (SmpB)"/>
    <property type="match status" value="1"/>
</dbReference>
<dbReference type="PROSITE" id="PS01317">
    <property type="entry name" value="SSRP"/>
    <property type="match status" value="1"/>
</dbReference>
<evidence type="ECO:0000255" key="1">
    <source>
        <dbReference type="HAMAP-Rule" id="MF_00023"/>
    </source>
</evidence>
<keyword id="KW-0963">Cytoplasm</keyword>
<keyword id="KW-1185">Reference proteome</keyword>
<keyword id="KW-0694">RNA-binding</keyword>
<proteinExistence type="inferred from homology"/>